<reference key="1">
    <citation type="journal article" date="1993" name="Yeast">
        <title>Sequence of a 7.8 kb segment on the left arm of yeast chromosome XI reveals four open reading frames, including the CAP1 gene, an intron-containing gene and a gene encoding a homolog to the mammalian UOG-1 gene.</title>
        <authorList>
            <person name="Boyer J."/>
            <person name="Pascolo S."/>
            <person name="Richard G.-F."/>
            <person name="Dujon B."/>
        </authorList>
    </citation>
    <scope>NUCLEOTIDE SEQUENCE [GENOMIC DNA]</scope>
</reference>
<reference key="2">
    <citation type="journal article" date="1994" name="Nature">
        <title>Complete DNA sequence of yeast chromosome XI.</title>
        <authorList>
            <person name="Dujon B."/>
            <person name="Alexandraki D."/>
            <person name="Andre B."/>
            <person name="Ansorge W."/>
            <person name="Baladron V."/>
            <person name="Ballesta J.P.G."/>
            <person name="Banrevi A."/>
            <person name="Bolle P.-A."/>
            <person name="Bolotin-Fukuhara M."/>
            <person name="Bossier P."/>
            <person name="Bou G."/>
            <person name="Boyer J."/>
            <person name="Buitrago M.J."/>
            <person name="Cheret G."/>
            <person name="Colleaux L."/>
            <person name="Daignan-Fornier B."/>
            <person name="del Rey F."/>
            <person name="Dion C."/>
            <person name="Domdey H."/>
            <person name="Duesterhoeft A."/>
            <person name="Duesterhus S."/>
            <person name="Entian K.-D."/>
            <person name="Erfle H."/>
            <person name="Esteban P.F."/>
            <person name="Feldmann H."/>
            <person name="Fernandes L."/>
            <person name="Fobo G.M."/>
            <person name="Fritz C."/>
            <person name="Fukuhara H."/>
            <person name="Gabel C."/>
            <person name="Gaillon L."/>
            <person name="Garcia-Cantalejo J.M."/>
            <person name="Garcia-Ramirez J.J."/>
            <person name="Gent M.E."/>
            <person name="Ghazvini M."/>
            <person name="Goffeau A."/>
            <person name="Gonzalez A."/>
            <person name="Grothues D."/>
            <person name="Guerreiro P."/>
            <person name="Hegemann J.H."/>
            <person name="Hewitt N."/>
            <person name="Hilger F."/>
            <person name="Hollenberg C.P."/>
            <person name="Horaitis O."/>
            <person name="Indge K.J."/>
            <person name="Jacquier A."/>
            <person name="James C.M."/>
            <person name="Jauniaux J.-C."/>
            <person name="Jimenez A."/>
            <person name="Keuchel H."/>
            <person name="Kirchrath L."/>
            <person name="Kleine K."/>
            <person name="Koetter P."/>
            <person name="Legrain P."/>
            <person name="Liebl S."/>
            <person name="Louis E.J."/>
            <person name="Maia e Silva A."/>
            <person name="Marck C."/>
            <person name="Monnier A.-L."/>
            <person name="Moestl D."/>
            <person name="Mueller S."/>
            <person name="Obermaier B."/>
            <person name="Oliver S.G."/>
            <person name="Pallier C."/>
            <person name="Pascolo S."/>
            <person name="Pfeiffer F."/>
            <person name="Philippsen P."/>
            <person name="Planta R.J."/>
            <person name="Pohl F.M."/>
            <person name="Pohl T.M."/>
            <person name="Poehlmann R."/>
            <person name="Portetelle D."/>
            <person name="Purnelle B."/>
            <person name="Puzos V."/>
            <person name="Ramezani Rad M."/>
            <person name="Rasmussen S.W."/>
            <person name="Remacha M.A."/>
            <person name="Revuelta J.L."/>
            <person name="Richard G.-F."/>
            <person name="Rieger M."/>
            <person name="Rodrigues-Pousada C."/>
            <person name="Rose M."/>
            <person name="Rupp T."/>
            <person name="Santos M.A."/>
            <person name="Schwager C."/>
            <person name="Sensen C."/>
            <person name="Skala J."/>
            <person name="Soares H."/>
            <person name="Sor F."/>
            <person name="Stegemann J."/>
            <person name="Tettelin H."/>
            <person name="Thierry A."/>
            <person name="Tzermia M."/>
            <person name="Urrestarazu L.A."/>
            <person name="van Dyck L."/>
            <person name="van Vliet-Reedijk J.C."/>
            <person name="Valens M."/>
            <person name="Vandenbol M."/>
            <person name="Vilela C."/>
            <person name="Vissers S."/>
            <person name="von Wettstein D."/>
            <person name="Voss H."/>
            <person name="Wiemann S."/>
            <person name="Xu G."/>
            <person name="Zimmermann J."/>
            <person name="Haasemann M."/>
            <person name="Becker I."/>
            <person name="Mewes H.-W."/>
        </authorList>
    </citation>
    <scope>NUCLEOTIDE SEQUENCE [LARGE SCALE GENOMIC DNA]</scope>
    <source>
        <strain>ATCC 204508 / S288c</strain>
    </source>
</reference>
<reference key="3">
    <citation type="journal article" date="2014" name="G3 (Bethesda)">
        <title>The reference genome sequence of Saccharomyces cerevisiae: Then and now.</title>
        <authorList>
            <person name="Engel S.R."/>
            <person name="Dietrich F.S."/>
            <person name="Fisk D.G."/>
            <person name="Binkley G."/>
            <person name="Balakrishnan R."/>
            <person name="Costanzo M.C."/>
            <person name="Dwight S.S."/>
            <person name="Hitz B.C."/>
            <person name="Karra K."/>
            <person name="Nash R.S."/>
            <person name="Weng S."/>
            <person name="Wong E.D."/>
            <person name="Lloyd P."/>
            <person name="Skrzypek M.S."/>
            <person name="Miyasato S.R."/>
            <person name="Simison M."/>
            <person name="Cherry J.M."/>
        </authorList>
    </citation>
    <scope>GENOME REANNOTATION</scope>
    <source>
        <strain>ATCC 204508 / S288c</strain>
    </source>
</reference>
<reference key="4">
    <citation type="journal article" date="1995" name="Nature">
        <title>A SNARE-like protein required for traffic through the Golgi complex.</title>
        <authorList>
            <person name="Banfield D.K."/>
            <person name="Lewis M.J."/>
            <person name="Pelham H.R.B."/>
        </authorList>
    </citation>
    <scope>FUNCTION</scope>
    <scope>SUBCELLULAR LOCATION</scope>
</reference>
<reference key="5">
    <citation type="journal article" date="2000" name="Nature">
        <title>Topological restriction of SNARE-dependent membrane fusion.</title>
        <authorList>
            <person name="Parlati F."/>
            <person name="McNew J.A."/>
            <person name="Fukuda R."/>
            <person name="Miller R."/>
            <person name="Sollner T.H."/>
            <person name="Rothman J.E."/>
        </authorList>
    </citation>
    <scope>FUNCTION</scope>
    <scope>INTERACTION WITH SED5; GOS1 AND YKT6</scope>
</reference>
<reference key="6">
    <citation type="journal article" date="2004" name="J. Biol. Chem.">
        <title>Retrograde transport of the mannosyltransferase Och1p to the early Golgi requires a component of the COG transport complex.</title>
        <authorList>
            <person name="Bruinsma P."/>
            <person name="Spelbrink R.G."/>
            <person name="Nothwehr S.F."/>
        </authorList>
    </citation>
    <scope>FUNCTION</scope>
</reference>
<proteinExistence type="evidence at protein level"/>
<evidence type="ECO:0000255" key="1"/>
<evidence type="ECO:0000255" key="2">
    <source>
        <dbReference type="PROSITE-ProRule" id="PRU00202"/>
    </source>
</evidence>
<evidence type="ECO:0000269" key="3">
    <source>
    </source>
</evidence>
<evidence type="ECO:0000269" key="4">
    <source>
    </source>
</evidence>
<evidence type="ECO:0000269" key="5">
    <source>
    </source>
</evidence>
<dbReference type="EMBL" id="Z28006">
    <property type="protein sequence ID" value="CAA81840.1"/>
    <property type="molecule type" value="Genomic_DNA"/>
</dbReference>
<dbReference type="EMBL" id="Z28007">
    <property type="protein sequence ID" value="CAA81842.1"/>
    <property type="molecule type" value="Genomic_DNA"/>
</dbReference>
<dbReference type="EMBL" id="BK006944">
    <property type="protein sequence ID" value="DAA09150.1"/>
    <property type="molecule type" value="Genomic_DNA"/>
</dbReference>
<dbReference type="PIR" id="S58405">
    <property type="entry name" value="S58405"/>
</dbReference>
<dbReference type="RefSeq" id="NP_012919.3">
    <property type="nucleotide sequence ID" value="NM_001180028.3"/>
</dbReference>
<dbReference type="SMR" id="P43682"/>
<dbReference type="BioGRID" id="34126">
    <property type="interactions" value="44"/>
</dbReference>
<dbReference type="ComplexPortal" id="CPX-1855">
    <property type="entry name" value="Golgi SNARE complex SED5-GOS1-SFT1-YKT6"/>
</dbReference>
<dbReference type="DIP" id="DIP-4355N"/>
<dbReference type="FunCoup" id="P43682">
    <property type="interactions" value="135"/>
</dbReference>
<dbReference type="IntAct" id="P43682">
    <property type="interactions" value="9"/>
</dbReference>
<dbReference type="MINT" id="P43682"/>
<dbReference type="STRING" id="4932.YKL006C-A"/>
<dbReference type="iPTMnet" id="P43682"/>
<dbReference type="PaxDb" id="4932-YKL006C-A"/>
<dbReference type="PeptideAtlas" id="P43682"/>
<dbReference type="EnsemblFungi" id="YKL006C-A_mRNA">
    <property type="protein sequence ID" value="YKL006C-A"/>
    <property type="gene ID" value="YKL006C-A"/>
</dbReference>
<dbReference type="GeneID" id="853863"/>
<dbReference type="KEGG" id="sce:YKL006C-A"/>
<dbReference type="AGR" id="SGD:S000002101"/>
<dbReference type="SGD" id="S000002101">
    <property type="gene designation" value="SFT1"/>
</dbReference>
<dbReference type="VEuPathDB" id="FungiDB:YKL006C-A"/>
<dbReference type="eggNOG" id="ENOG502S4UD">
    <property type="taxonomic scope" value="Eukaryota"/>
</dbReference>
<dbReference type="HOGENOM" id="CLU_150783_1_0_1"/>
<dbReference type="InParanoid" id="P43682"/>
<dbReference type="OMA" id="NIWRMVG"/>
<dbReference type="OrthoDB" id="3063237at2759"/>
<dbReference type="BioCyc" id="YEAST:G3O-32070-MONOMER"/>
<dbReference type="Reactome" id="R-SCE-6807878">
    <property type="pathway name" value="COPI-mediated anterograde transport"/>
</dbReference>
<dbReference type="Reactome" id="R-SCE-6811438">
    <property type="pathway name" value="Intra-Golgi traffic"/>
</dbReference>
<dbReference type="BioGRID-ORCS" id="853863">
    <property type="hits" value="3 hits in 10 CRISPR screens"/>
</dbReference>
<dbReference type="PRO" id="PR:P43682"/>
<dbReference type="Proteomes" id="UP000002311">
    <property type="component" value="Chromosome XI"/>
</dbReference>
<dbReference type="RNAct" id="P43682">
    <property type="molecule type" value="protein"/>
</dbReference>
<dbReference type="GO" id="GO:0005789">
    <property type="term" value="C:endoplasmic reticulum membrane"/>
    <property type="evidence" value="ECO:0000303"/>
    <property type="project" value="ComplexPortal"/>
</dbReference>
<dbReference type="GO" id="GO:1990674">
    <property type="term" value="C:Golgi cis cisterna membrane"/>
    <property type="evidence" value="ECO:0000303"/>
    <property type="project" value="ComplexPortal"/>
</dbReference>
<dbReference type="GO" id="GO:0000139">
    <property type="term" value="C:Golgi membrane"/>
    <property type="evidence" value="ECO:0007669"/>
    <property type="project" value="UniProtKB-SubCell"/>
</dbReference>
<dbReference type="GO" id="GO:0000138">
    <property type="term" value="C:Golgi trans cisterna"/>
    <property type="evidence" value="ECO:0000314"/>
    <property type="project" value="SGD"/>
</dbReference>
<dbReference type="GO" id="GO:0031201">
    <property type="term" value="C:SNARE complex"/>
    <property type="evidence" value="ECO:0000314"/>
    <property type="project" value="SGD"/>
</dbReference>
<dbReference type="GO" id="GO:0005484">
    <property type="term" value="F:SNAP receptor activity"/>
    <property type="evidence" value="ECO:0000314"/>
    <property type="project" value="SGD"/>
</dbReference>
<dbReference type="GO" id="GO:0006888">
    <property type="term" value="P:endoplasmic reticulum to Golgi vesicle-mediated transport"/>
    <property type="evidence" value="ECO:0000314"/>
    <property type="project" value="ComplexPortal"/>
</dbReference>
<dbReference type="GO" id="GO:0006891">
    <property type="term" value="P:intra-Golgi vesicle-mediated transport"/>
    <property type="evidence" value="ECO:0000315"/>
    <property type="project" value="SGD"/>
</dbReference>
<dbReference type="GO" id="GO:0006886">
    <property type="term" value="P:intracellular protein transport"/>
    <property type="evidence" value="ECO:0000314"/>
    <property type="project" value="ComplexPortal"/>
</dbReference>
<dbReference type="GO" id="GO:0006906">
    <property type="term" value="P:vesicle fusion"/>
    <property type="evidence" value="ECO:0000314"/>
    <property type="project" value="ComplexPortal"/>
</dbReference>
<dbReference type="GO" id="GO:0048280">
    <property type="term" value="P:vesicle fusion with Golgi apparatus"/>
    <property type="evidence" value="ECO:0000303"/>
    <property type="project" value="ComplexPortal"/>
</dbReference>
<dbReference type="CDD" id="cd15853">
    <property type="entry name" value="SNARE_Bet1"/>
    <property type="match status" value="1"/>
</dbReference>
<dbReference type="InterPro" id="IPR039899">
    <property type="entry name" value="BET1_SNARE"/>
</dbReference>
<dbReference type="InterPro" id="IPR000727">
    <property type="entry name" value="T_SNARE_dom"/>
</dbReference>
<dbReference type="PANTHER" id="PTHR12791">
    <property type="entry name" value="GOLGI SNARE BET1-RELATED"/>
    <property type="match status" value="1"/>
</dbReference>
<dbReference type="SMART" id="SM00397">
    <property type="entry name" value="t_SNARE"/>
    <property type="match status" value="1"/>
</dbReference>
<dbReference type="SUPFAM" id="SSF58038">
    <property type="entry name" value="SNARE fusion complex"/>
    <property type="match status" value="1"/>
</dbReference>
<dbReference type="PROSITE" id="PS50192">
    <property type="entry name" value="T_SNARE"/>
    <property type="match status" value="1"/>
</dbReference>
<protein>
    <recommendedName>
        <fullName>Protein transport protein SFT1</fullName>
    </recommendedName>
    <alternativeName>
        <fullName>P14</fullName>
    </alternativeName>
</protein>
<organism>
    <name type="scientific">Saccharomyces cerevisiae (strain ATCC 204508 / S288c)</name>
    <name type="common">Baker's yeast</name>
    <dbReference type="NCBI Taxonomy" id="559292"/>
    <lineage>
        <taxon>Eukaryota</taxon>
        <taxon>Fungi</taxon>
        <taxon>Dikarya</taxon>
        <taxon>Ascomycota</taxon>
        <taxon>Saccharomycotina</taxon>
        <taxon>Saccharomycetes</taxon>
        <taxon>Saccharomycetales</taxon>
        <taxon>Saccharomycetaceae</taxon>
        <taxon>Saccharomyces</taxon>
    </lineage>
</organism>
<feature type="chain" id="PRO_0000097712" description="Protein transport protein SFT1">
    <location>
        <begin position="1"/>
        <end position="97"/>
    </location>
</feature>
<feature type="topological domain" description="Cytoplasmic" evidence="1">
    <location>
        <begin position="1"/>
        <end position="74"/>
    </location>
</feature>
<feature type="transmembrane region" description="Helical; Anchor for type IV membrane protein" evidence="1">
    <location>
        <begin position="75"/>
        <end position="94"/>
    </location>
</feature>
<feature type="topological domain" description="Lumenal" evidence="1">
    <location>
        <begin position="95"/>
        <end position="97"/>
    </location>
</feature>
<feature type="domain" description="t-SNARE coiled-coil homology" evidence="2">
    <location>
        <begin position="7"/>
        <end position="69"/>
    </location>
</feature>
<name>SFT1_YEAST</name>
<sequence>MSNSRYSQTESNNDRKLEGLANKLATFRNINQEIGDRAVSDSSVINQMTDSLGSMFTDIKNSSSRLTRSLKAGNSIWRMVGLALLIFFILYTLFKLF</sequence>
<accession>P43682</accession>
<accession>D6VXT0</accession>
<comment type="function">
    <text evidence="3 4 5">Vesicle SNARE required for retrograde transport within the Golgi complex.</text>
</comment>
<comment type="subunit">
    <text>Component of a SNARE complex consisting of SED5, GOS1, YKT6 and SFT1.</text>
</comment>
<comment type="interaction">
    <interactant intactId="EBI-17040">
        <id>P43682</id>
    </interactant>
    <interactant intactId="EBI-16930">
        <id>Q01590</id>
        <label>SED5</label>
    </interactant>
    <organismsDiffer>false</organismsDiffer>
    <experiments>2</experiments>
</comment>
<comment type="subcellular location">
    <subcellularLocation>
        <location evidence="5">Golgi apparatus membrane</location>
        <topology evidence="5">Single-pass type IV membrane protein</topology>
    </subcellularLocation>
</comment>
<comment type="miscellaneous">
    <text>Multicopy suppressor of sed5-1.</text>
</comment>
<gene>
    <name type="primary">SFT1</name>
    <name type="ordered locus">YKL006C-A</name>
    <name type="ORF">YKL006BC</name>
</gene>
<keyword id="KW-0175">Coiled coil</keyword>
<keyword id="KW-0333">Golgi apparatus</keyword>
<keyword id="KW-0472">Membrane</keyword>
<keyword id="KW-0653">Protein transport</keyword>
<keyword id="KW-1185">Reference proteome</keyword>
<keyword id="KW-0812">Transmembrane</keyword>
<keyword id="KW-1133">Transmembrane helix</keyword>
<keyword id="KW-0813">Transport</keyword>